<evidence type="ECO:0000250" key="1">
    <source>
        <dbReference type="UniProtKB" id="Q5W726"/>
    </source>
</evidence>
<evidence type="ECO:0000255" key="2"/>
<evidence type="ECO:0000255" key="3">
    <source>
        <dbReference type="PROSITE-ProRule" id="PRU00805"/>
    </source>
</evidence>
<evidence type="ECO:0000269" key="4">
    <source>
    </source>
</evidence>
<evidence type="ECO:0000269" key="5">
    <source>
    </source>
</evidence>
<evidence type="ECO:0000269" key="6">
    <source>
    </source>
</evidence>
<evidence type="ECO:0000269" key="7">
    <source>
    </source>
</evidence>
<evidence type="ECO:0000303" key="8">
    <source>
    </source>
</evidence>
<evidence type="ECO:0000303" key="9">
    <source>
    </source>
</evidence>
<evidence type="ECO:0000305" key="10"/>
<evidence type="ECO:0000312" key="11">
    <source>
        <dbReference type="Araport" id="AT1G80330"/>
    </source>
</evidence>
<evidence type="ECO:0000312" key="12">
    <source>
        <dbReference type="EMBL" id="AAG52440.1"/>
    </source>
</evidence>
<keyword id="KW-0223">Dioxygenase</keyword>
<keyword id="KW-0408">Iron</keyword>
<keyword id="KW-0479">Metal-binding</keyword>
<keyword id="KW-0560">Oxidoreductase</keyword>
<keyword id="KW-1185">Reference proteome</keyword>
<organism>
    <name type="scientific">Arabidopsis thaliana</name>
    <name type="common">Mouse-ear cress</name>
    <dbReference type="NCBI Taxonomy" id="3702"/>
    <lineage>
        <taxon>Eukaryota</taxon>
        <taxon>Viridiplantae</taxon>
        <taxon>Streptophyta</taxon>
        <taxon>Embryophyta</taxon>
        <taxon>Tracheophyta</taxon>
        <taxon>Spermatophyta</taxon>
        <taxon>Magnoliopsida</taxon>
        <taxon>eudicotyledons</taxon>
        <taxon>Gunneridae</taxon>
        <taxon>Pentapetalae</taxon>
        <taxon>rosids</taxon>
        <taxon>malvids</taxon>
        <taxon>Brassicales</taxon>
        <taxon>Brassicaceae</taxon>
        <taxon>Camelineae</taxon>
        <taxon>Arabidopsis</taxon>
    </lineage>
</organism>
<comment type="function">
    <text evidence="5 6">Converts the inactive gibberellin (GA) precursors GA9 and GA20 in the bioactives gibberellins GA4 and GA1. Involved in the production of bioactive GA for reproductive development.</text>
</comment>
<comment type="catalytic activity">
    <reaction evidence="5">
        <text>gibberellin A20 + 2-oxoglutarate + O2 = gibberellin A1 + succinate + CO2</text>
        <dbReference type="Rhea" id="RHEA:10104"/>
        <dbReference type="ChEBI" id="CHEBI:15379"/>
        <dbReference type="ChEBI" id="CHEBI:16526"/>
        <dbReference type="ChEBI" id="CHEBI:16810"/>
        <dbReference type="ChEBI" id="CHEBI:30031"/>
        <dbReference type="ChEBI" id="CHEBI:58524"/>
        <dbReference type="ChEBI" id="CHEBI:58526"/>
        <dbReference type="EC" id="1.14.11.15"/>
    </reaction>
    <physiologicalReaction direction="left-to-right" evidence="5">
        <dbReference type="Rhea" id="RHEA:10105"/>
    </physiologicalReaction>
</comment>
<comment type="cofactor">
    <cofactor evidence="1">
        <name>L-ascorbate</name>
        <dbReference type="ChEBI" id="CHEBI:38290"/>
    </cofactor>
</comment>
<comment type="cofactor">
    <cofactor evidence="3">
        <name>Fe cation</name>
        <dbReference type="ChEBI" id="CHEBI:24875"/>
    </cofactor>
</comment>
<comment type="biophysicochemical properties">
    <kinetics>
        <KM evidence="5">0.85 uM for GA20</KM>
        <Vmax evidence="5">52500.0 pmol/sec/mg enzyme</Vmax>
    </kinetics>
</comment>
<comment type="pathway">
    <text evidence="5">Plant hormone biosynthesis; gibberellin biosynthesis.</text>
</comment>
<comment type="tissue specificity">
    <text evidence="4 6 7">Expressed in siliques and in seeds, specifically at the rim of the embryo and the outer integument. Also expressed in flowers. Not detected in roots, stems and leaves.</text>
</comment>
<comment type="developmental stage">
    <text evidence="4">Expressed in developing siliques 3-13 days after pollination.</text>
</comment>
<comment type="disruption phenotype">
    <text evidence="4">No visible phenotype, but abnormal formation of the seed coat.</text>
</comment>
<comment type="similarity">
    <text evidence="10">Belongs to the iron/ascorbate-dependent oxidoreductase family. GA3OX subfamily.</text>
</comment>
<comment type="sequence caution" evidence="10">
    <conflict type="frameshift">
        <sequence resource="EMBL-CDS" id="ABE97176"/>
    </conflict>
</comment>
<dbReference type="EC" id="1.14.11.15" evidence="5"/>
<dbReference type="EMBL" id="AC018848">
    <property type="protein sequence ID" value="AAG52440.1"/>
    <property type="molecule type" value="Genomic_DNA"/>
</dbReference>
<dbReference type="EMBL" id="CP002684">
    <property type="protein sequence ID" value="AEE36388.1"/>
    <property type="molecule type" value="Genomic_DNA"/>
</dbReference>
<dbReference type="EMBL" id="DQ459178">
    <property type="protein sequence ID" value="ABE97176.1"/>
    <property type="status" value="ALT_FRAME"/>
    <property type="molecule type" value="mRNA"/>
</dbReference>
<dbReference type="PIR" id="H96834">
    <property type="entry name" value="H96834"/>
</dbReference>
<dbReference type="RefSeq" id="NP_178149.1">
    <property type="nucleotide sequence ID" value="NM_106682.1"/>
</dbReference>
<dbReference type="SMR" id="Q9C971"/>
<dbReference type="FunCoup" id="Q9C971">
    <property type="interactions" value="20"/>
</dbReference>
<dbReference type="STRING" id="3702.Q9C971"/>
<dbReference type="PaxDb" id="3702-AT1G80330.1"/>
<dbReference type="ProteomicsDB" id="230541"/>
<dbReference type="EnsemblPlants" id="AT1G80330.1">
    <property type="protein sequence ID" value="AT1G80330.1"/>
    <property type="gene ID" value="AT1G80330"/>
</dbReference>
<dbReference type="GeneID" id="844373"/>
<dbReference type="Gramene" id="AT1G80330.1">
    <property type="protein sequence ID" value="AT1G80330.1"/>
    <property type="gene ID" value="AT1G80330"/>
</dbReference>
<dbReference type="KEGG" id="ath:AT1G80330"/>
<dbReference type="Araport" id="AT1G80330"/>
<dbReference type="TAIR" id="AT1G80330">
    <property type="gene designation" value="GA3OX4"/>
</dbReference>
<dbReference type="eggNOG" id="KOG0143">
    <property type="taxonomic scope" value="Eukaryota"/>
</dbReference>
<dbReference type="HOGENOM" id="CLU_010119_16_3_1"/>
<dbReference type="InParanoid" id="Q9C971"/>
<dbReference type="OMA" id="WGGPAGE"/>
<dbReference type="PhylomeDB" id="Q9C971"/>
<dbReference type="BioCyc" id="ARA:AT1G80330-MONOMER"/>
<dbReference type="BioCyc" id="MetaCyc:AT1G80330-MONOMER"/>
<dbReference type="BRENDA" id="1.14.11.15">
    <property type="organism ID" value="399"/>
</dbReference>
<dbReference type="SABIO-RK" id="Q9C971"/>
<dbReference type="UniPathway" id="UPA00390"/>
<dbReference type="PRO" id="PR:Q9C971"/>
<dbReference type="Proteomes" id="UP000006548">
    <property type="component" value="Chromosome 1"/>
</dbReference>
<dbReference type="ExpressionAtlas" id="Q9C971">
    <property type="expression patterns" value="baseline and differential"/>
</dbReference>
<dbReference type="GO" id="GO:0016707">
    <property type="term" value="F:gibberellin 3-beta-dioxygenase activity"/>
    <property type="evidence" value="ECO:0000314"/>
    <property type="project" value="TAIR"/>
</dbReference>
<dbReference type="GO" id="GO:0046872">
    <property type="term" value="F:metal ion binding"/>
    <property type="evidence" value="ECO:0007669"/>
    <property type="project" value="UniProtKB-KW"/>
</dbReference>
<dbReference type="GO" id="GO:0009686">
    <property type="term" value="P:gibberellin biosynthetic process"/>
    <property type="evidence" value="ECO:0000314"/>
    <property type="project" value="TAIR"/>
</dbReference>
<dbReference type="FunFam" id="2.60.120.330:FF:000013">
    <property type="entry name" value="Gibberellin 3-beta-dioxygenase 1"/>
    <property type="match status" value="1"/>
</dbReference>
<dbReference type="Gene3D" id="2.60.120.330">
    <property type="entry name" value="B-lactam Antibiotic, Isopenicillin N Synthase, Chain"/>
    <property type="match status" value="1"/>
</dbReference>
<dbReference type="InterPro" id="IPR026992">
    <property type="entry name" value="DIOX_N"/>
</dbReference>
<dbReference type="InterPro" id="IPR044861">
    <property type="entry name" value="IPNS-like_FE2OG_OXY"/>
</dbReference>
<dbReference type="InterPro" id="IPR027443">
    <property type="entry name" value="IPNS-like_sf"/>
</dbReference>
<dbReference type="InterPro" id="IPR050231">
    <property type="entry name" value="Iron_ascorbate_oxido_reductase"/>
</dbReference>
<dbReference type="InterPro" id="IPR005123">
    <property type="entry name" value="Oxoglu/Fe-dep_dioxygenase_dom"/>
</dbReference>
<dbReference type="PANTHER" id="PTHR47990">
    <property type="entry name" value="2-OXOGLUTARATE (2OG) AND FE(II)-DEPENDENT OXYGENASE SUPERFAMILY PROTEIN-RELATED"/>
    <property type="match status" value="1"/>
</dbReference>
<dbReference type="Pfam" id="PF03171">
    <property type="entry name" value="2OG-FeII_Oxy"/>
    <property type="match status" value="1"/>
</dbReference>
<dbReference type="Pfam" id="PF14226">
    <property type="entry name" value="DIOX_N"/>
    <property type="match status" value="1"/>
</dbReference>
<dbReference type="PRINTS" id="PR00682">
    <property type="entry name" value="IPNSYNTHASE"/>
</dbReference>
<dbReference type="SUPFAM" id="SSF51197">
    <property type="entry name" value="Clavaminate synthase-like"/>
    <property type="match status" value="1"/>
</dbReference>
<dbReference type="PROSITE" id="PS51471">
    <property type="entry name" value="FE2OG_OXY"/>
    <property type="match status" value="1"/>
</dbReference>
<reference key="1">
    <citation type="journal article" date="2000" name="Nature">
        <title>Sequence and analysis of chromosome 1 of the plant Arabidopsis thaliana.</title>
        <authorList>
            <person name="Theologis A."/>
            <person name="Ecker J.R."/>
            <person name="Palm C.J."/>
            <person name="Federspiel N.A."/>
            <person name="Kaul S."/>
            <person name="White O."/>
            <person name="Alonso J."/>
            <person name="Altafi H."/>
            <person name="Araujo R."/>
            <person name="Bowman C.L."/>
            <person name="Brooks S.Y."/>
            <person name="Buehler E."/>
            <person name="Chan A."/>
            <person name="Chao Q."/>
            <person name="Chen H."/>
            <person name="Cheuk R.F."/>
            <person name="Chin C.W."/>
            <person name="Chung M.K."/>
            <person name="Conn L."/>
            <person name="Conway A.B."/>
            <person name="Conway A.R."/>
            <person name="Creasy T.H."/>
            <person name="Dewar K."/>
            <person name="Dunn P."/>
            <person name="Etgu P."/>
            <person name="Feldblyum T.V."/>
            <person name="Feng J.-D."/>
            <person name="Fong B."/>
            <person name="Fujii C.Y."/>
            <person name="Gill J.E."/>
            <person name="Goldsmith A.D."/>
            <person name="Haas B."/>
            <person name="Hansen N.F."/>
            <person name="Hughes B."/>
            <person name="Huizar L."/>
            <person name="Hunter J.L."/>
            <person name="Jenkins J."/>
            <person name="Johnson-Hopson C."/>
            <person name="Khan S."/>
            <person name="Khaykin E."/>
            <person name="Kim C.J."/>
            <person name="Koo H.L."/>
            <person name="Kremenetskaia I."/>
            <person name="Kurtz D.B."/>
            <person name="Kwan A."/>
            <person name="Lam B."/>
            <person name="Langin-Hooper S."/>
            <person name="Lee A."/>
            <person name="Lee J.M."/>
            <person name="Lenz C.A."/>
            <person name="Li J.H."/>
            <person name="Li Y.-P."/>
            <person name="Lin X."/>
            <person name="Liu S.X."/>
            <person name="Liu Z.A."/>
            <person name="Luros J.S."/>
            <person name="Maiti R."/>
            <person name="Marziali A."/>
            <person name="Militscher J."/>
            <person name="Miranda M."/>
            <person name="Nguyen M."/>
            <person name="Nierman W.C."/>
            <person name="Osborne B.I."/>
            <person name="Pai G."/>
            <person name="Peterson J."/>
            <person name="Pham P.K."/>
            <person name="Rizzo M."/>
            <person name="Rooney T."/>
            <person name="Rowley D."/>
            <person name="Sakano H."/>
            <person name="Salzberg S.L."/>
            <person name="Schwartz J.R."/>
            <person name="Shinn P."/>
            <person name="Southwick A.M."/>
            <person name="Sun H."/>
            <person name="Tallon L.J."/>
            <person name="Tambunga G."/>
            <person name="Toriumi M.J."/>
            <person name="Town C.D."/>
            <person name="Utterback T."/>
            <person name="Van Aken S."/>
            <person name="Vaysberg M."/>
            <person name="Vysotskaia V.S."/>
            <person name="Walker M."/>
            <person name="Wu D."/>
            <person name="Yu G."/>
            <person name="Fraser C.M."/>
            <person name="Venter J.C."/>
            <person name="Davis R.W."/>
        </authorList>
    </citation>
    <scope>NUCLEOTIDE SEQUENCE [LARGE SCALE GENOMIC DNA]</scope>
    <source>
        <strain>cv. Columbia</strain>
    </source>
</reference>
<reference key="2">
    <citation type="journal article" date="2017" name="Plant J.">
        <title>Araport11: a complete reannotation of the Arabidopsis thaliana reference genome.</title>
        <authorList>
            <person name="Cheng C.Y."/>
            <person name="Krishnakumar V."/>
            <person name="Chan A.P."/>
            <person name="Thibaud-Nissen F."/>
            <person name="Schobel S."/>
            <person name="Town C.D."/>
        </authorList>
    </citation>
    <scope>GENOME REANNOTATION</scope>
    <source>
        <strain>cv. Columbia</strain>
    </source>
</reference>
<reference key="3">
    <citation type="journal article" date="2006" name="Plant Biotechnol. J.">
        <title>Simultaneous high-throughput recombinational cloning of open reading frames in closed and open configurations.</title>
        <authorList>
            <person name="Underwood B.A."/>
            <person name="Vanderhaeghen R."/>
            <person name="Whitford R."/>
            <person name="Town C.D."/>
            <person name="Hilson P."/>
        </authorList>
    </citation>
    <scope>NUCLEOTIDE SEQUENCE [LARGE SCALE MRNA]</scope>
    <source>
        <strain>cv. Columbia</strain>
    </source>
</reference>
<reference key="4">
    <citation type="journal article" date="2005" name="BMC Plant Biol.">
        <title>Purification and kinetic studies of recombinant gibberellin dioxygenases.</title>
        <authorList>
            <person name="Lester D.R."/>
            <person name="Phillips A."/>
            <person name="Hedden P."/>
            <person name="Andersson I."/>
        </authorList>
    </citation>
    <scope>FUNCTION</scope>
    <scope>CATALYTIC ACTIVITY</scope>
    <scope>PATHWAY</scope>
    <scope>CHARACTERIZATION</scope>
    <scope>BIOPHYSICOCHEMICAL PROPERTIES</scope>
</reference>
<reference key="5">
    <citation type="journal article" date="2005" name="Plant Cell Physiol.">
        <title>Contribution of gibberellins to the formation of Arabidopsis seed coat through starch degradation.</title>
        <authorList>
            <person name="Kim Y.C."/>
            <person name="Nakajima M."/>
            <person name="Nakayama A."/>
            <person name="Yamaguchi I."/>
        </authorList>
    </citation>
    <scope>DEVELOPMENTAL STAGE</scope>
    <scope>TISSUE SPECIFICITY</scope>
    <scope>DISRUPTION PHENOTYPE</scope>
</reference>
<reference key="6">
    <citation type="journal article" date="2006" name="Plant J.">
        <title>Distinct and overlapping roles of two gibberellin 3-oxidases in Arabidopsis development.</title>
        <authorList>
            <person name="Mitchum M.G."/>
            <person name="Yamaguchi S."/>
            <person name="Hanada A."/>
            <person name="Kuwahara A."/>
            <person name="Yoshioka Y."/>
            <person name="Kato T."/>
            <person name="Tabata S."/>
            <person name="Kamiya Y."/>
            <person name="Sun T.P."/>
        </authorList>
    </citation>
    <scope>FUNCTION</scope>
    <scope>TISSUE SPECIFICITY</scope>
</reference>
<reference key="7">
    <citation type="journal article" date="2007" name="Plant Physiol.">
        <title>AGF1, an AT-hook protein, is necessary for the negative feedback of AtGA3ox1 encoding GA 3-oxidase.</title>
        <authorList>
            <person name="Matsushita A."/>
            <person name="Furumoto T."/>
            <person name="Ishida S."/>
            <person name="Takahashi Y."/>
        </authorList>
    </citation>
    <scope>TISSUE SPECIFICITY</scope>
</reference>
<reference key="8">
    <citation type="journal article" date="2011" name="Gene">
        <title>Evolutionary analysis of three gibberellin oxidase genes in rice, Arabidopsis, and soybean.</title>
        <authorList>
            <person name="Han F."/>
            <person name="Zhu B."/>
        </authorList>
    </citation>
    <scope>GENE FAMILY</scope>
</reference>
<accession>Q9C971</accession>
<accession>Q1KS84</accession>
<sequence>MPSLAEEICIGNLGSLQTLPESFTWKLTAADSLLRPSSAVSFDAVEESIPVIDLSNPDVTTLIGDASKTWGAFQIANHGISQKLLDDIESLSKTLFDMPSERKLEAASSDKGVSGYGEPRISPFFEKKMWSEGFTIADDSYRNHFNTLWPHDHTKYCGIIQEYVDEMEKLASRLLYCILGSLGVTVEDIEWAHKLEKSGSKVGRGAIRLNHYPVCPEPERAMGLAAHTDSTILTILHQSNTGGLQVFREESGWVTVEPAPGVLVVNIGDLFHILSNGKIPSVVHRAKVNHTRSRISIAYLWGGPAGDVQIAPISKLTGPAEPSLYRSITWKEYLQIKYEVFDKAMDAIRVVNPTN</sequence>
<name>G3OX4_ARATH</name>
<protein>
    <recommendedName>
        <fullName evidence="8 9">Gibberellin 3-beta-dioxygenase 4</fullName>
        <ecNumber evidence="5">1.14.11.15</ecNumber>
    </recommendedName>
    <alternativeName>
        <fullName evidence="8 9">GA 3-oxidase 4</fullName>
        <shortName evidence="8 9">AtGA3ox4</shortName>
    </alternativeName>
    <alternativeName>
        <fullName evidence="8 9">Gibberellin 3 beta-hydroxylase 4</fullName>
    </alternativeName>
</protein>
<proteinExistence type="evidence at protein level"/>
<gene>
    <name evidence="8 9" type="primary">GA3OX4</name>
    <name evidence="11" type="ordered locus">At1g80330</name>
    <name evidence="12" type="ORF">F5I6.8</name>
</gene>
<feature type="chain" id="PRO_0000067316" description="Gibberellin 3-beta-dioxygenase 4">
    <location>
        <begin position="1"/>
        <end position="355"/>
    </location>
</feature>
<feature type="domain" description="Fe2OG dioxygenase" evidence="3">
    <location>
        <begin position="203"/>
        <end position="303"/>
    </location>
</feature>
<feature type="active site" evidence="2">
    <location>
        <position position="294"/>
    </location>
</feature>
<feature type="binding site" evidence="3">
    <location>
        <position position="227"/>
    </location>
    <ligand>
        <name>Fe cation</name>
        <dbReference type="ChEBI" id="CHEBI:24875"/>
    </ligand>
</feature>
<feature type="binding site" evidence="3">
    <location>
        <position position="229"/>
    </location>
    <ligand>
        <name>Fe cation</name>
        <dbReference type="ChEBI" id="CHEBI:24875"/>
    </ligand>
</feature>
<feature type="binding site" evidence="3">
    <location>
        <position position="284"/>
    </location>
    <ligand>
        <name>Fe cation</name>
        <dbReference type="ChEBI" id="CHEBI:24875"/>
    </ligand>
</feature>